<name>NCAP_I78A3</name>
<keyword id="KW-0167">Capsid protein</keyword>
<keyword id="KW-1139">Helical capsid protein</keyword>
<keyword id="KW-1048">Host nucleus</keyword>
<keyword id="KW-0945">Host-virus interaction</keyword>
<keyword id="KW-0687">Ribonucleoprotein</keyword>
<keyword id="KW-0694">RNA-binding</keyword>
<keyword id="KW-0543">Viral nucleoprotein</keyword>
<keyword id="KW-1163">Viral penetration into host nucleus</keyword>
<keyword id="KW-0946">Virion</keyword>
<keyword id="KW-1160">Virus entry into host cell</keyword>
<gene>
    <name evidence="1" type="primary">NP</name>
</gene>
<comment type="function">
    <text evidence="1">Encapsidates the negative strand viral RNA, protecting it from nucleases. The encapsidated genomic RNA is termed the ribonucleoprotein (RNP) and serves as template for transcription and replication. The RNP needs to be localized in the host nucleus to start an infectious cycle, but is too large to diffuse through the nuclear pore complex. NP comprises at least 2 nuclear localization signals that are responsible for the active RNP import into the nucleus through cellular importin alpha/beta pathway. Later in the infection, nclear export of RNPs are mediated through viral proteins NEP interacting with M1 which binds nucleoproteins. It is possible that nucleoprotein binds directly host exportin-1/XPO1 and plays an active role in RNPs nuclear export. M1 interaction with RNP seems to hide nucleoprotein's nuclear localization signals. Soon after a virion infects a new cell, M1 dissociates from the RNP under acidification of the virion driven by M2 protein. Dissociation of M1 from RNP unmasks nucleoprotein's nuclear localization signals, targeting the RNP to the nucleus.</text>
</comment>
<comment type="subunit">
    <text evidence="1">Homomultimerizes to form the nucleocapsid. May bind host exportin-1/XPO1. Binds to viral genomic RNA. Protein-RNA contacts are mediated by a combination of electrostatic interactions between positively charged residues and the phosphate backbone and planar interactions between aromatic side chains and bases.</text>
</comment>
<comment type="subcellular location">
    <subcellularLocation>
        <location evidence="1">Virion</location>
    </subcellularLocation>
    <subcellularLocation>
        <location evidence="1">Host nucleus</location>
    </subcellularLocation>
</comment>
<comment type="PTM">
    <text evidence="1">Late in virus-infected cells, may be cleaved from a 56-kDa protein to a 53-kDa protein by a cellular caspase. This cleavage might be a marker for the onset of apoptosis in infected cells or have a specific function in virus host interaction.</text>
</comment>
<comment type="similarity">
    <text evidence="1">Belongs to the influenza viruses nucleoprotein family.</text>
</comment>
<reference key="1">
    <citation type="journal article" date="1986" name="Virology">
        <title>Nucleotide sequence analysis of the nucleoprotein gene of an avian and a human influenza virus strain identifies two classes of nucleoproteins.</title>
        <authorList>
            <person name="Buckler-White A.J."/>
            <person name="Murphy B.R."/>
        </authorList>
    </citation>
    <scope>NUCLEOTIDE SEQUENCE [GENOMIC RNA]</scope>
</reference>
<organism>
    <name type="scientific">Influenza A virus (strain A/Mallard/New York/6750/1978 H2N2)</name>
    <dbReference type="NCBI Taxonomy" id="384502"/>
    <lineage>
        <taxon>Viruses</taxon>
        <taxon>Riboviria</taxon>
        <taxon>Orthornavirae</taxon>
        <taxon>Negarnaviricota</taxon>
        <taxon>Polyploviricotina</taxon>
        <taxon>Insthoviricetes</taxon>
        <taxon>Articulavirales</taxon>
        <taxon>Orthomyxoviridae</taxon>
        <taxon>Alphainfluenzavirus</taxon>
        <taxon>Alphainfluenzavirus influenzae</taxon>
        <taxon>Influenza A virus</taxon>
    </lineage>
</organism>
<sequence>MASQGTKRSYEQMETGGERQNATEIRASVGRMVGGIGRFYIQMCTELKLSDYEGRLIQNSITIERMVLSAFDERRNKYLEEHPSAGKDPKKTGGPIYRRRDGKWVRELILYDKEEVRRIWRQANNGEDATAGLTHLMIWHSNLNDATYQRTRALVRTGMDPRMCSLMQGSTLPRRSGAAGAAVKGVGTMVMELIRMIKRGINDRNFWRGENGRRTRIAYERMCNILKGKFQTAAQRAMMDQVRESRNPGNAEIEDLIFLARSALILRGSVAHKSCLPACVYGLAVASGYDFEREGYSLVGIDPFRLLQNSQVFSLIRPNENPAHKSQLVWMACHSPAFEDLRVSSFIRGTRVVPRGQLSTRGVQIASNENMETMDSSTLELRSRYWAIRTRSGGNTNQQRASAGQISVQPTFSVQRNLPFERATIMAAFTGNTEGRTSDMRTEIIRMMENARPEDVSFQGRGVFELSDEKATNPIVPSFDMSNEGSYFFGDNAEEYDN</sequence>
<organismHost>
    <name type="scientific">Aves</name>
    <dbReference type="NCBI Taxonomy" id="8782"/>
</organismHost>
<organismHost>
    <name type="scientific">Homo sapiens</name>
    <name type="common">Human</name>
    <dbReference type="NCBI Taxonomy" id="9606"/>
</organismHost>
<evidence type="ECO:0000255" key="1">
    <source>
        <dbReference type="HAMAP-Rule" id="MF_04070"/>
    </source>
</evidence>
<evidence type="ECO:0000256" key="2">
    <source>
        <dbReference type="SAM" id="MobiDB-lite"/>
    </source>
</evidence>
<protein>
    <recommendedName>
        <fullName evidence="1">Nucleoprotein</fullName>
    </recommendedName>
    <alternativeName>
        <fullName evidence="1">Nucleocapsid protein</fullName>
        <shortName evidence="1">Protein N</shortName>
    </alternativeName>
</protein>
<feature type="chain" id="PRO_0000079074" description="Nucleoprotein">
    <location>
        <begin position="1"/>
        <end position="498"/>
    </location>
</feature>
<feature type="region of interest" description="Disordered" evidence="2">
    <location>
        <begin position="1"/>
        <end position="21"/>
    </location>
</feature>
<feature type="short sequence motif" description="Unconventional nuclear localization signal" evidence="1">
    <location>
        <begin position="1"/>
        <end position="18"/>
    </location>
</feature>
<feature type="short sequence motif" description="Bipartite nuclear localization signal" evidence="1">
    <location>
        <begin position="198"/>
        <end position="216"/>
    </location>
</feature>
<dbReference type="EMBL" id="M14921">
    <property type="protein sequence ID" value="AAA43310.1"/>
    <property type="molecule type" value="Genomic_RNA"/>
</dbReference>
<dbReference type="EMBL" id="D00050">
    <property type="protein sequence ID" value="BAA00034.1"/>
    <property type="molecule type" value="Genomic_RNA"/>
</dbReference>
<dbReference type="PIR" id="A25612">
    <property type="entry name" value="VHIVA6"/>
</dbReference>
<dbReference type="SMR" id="P06826"/>
<dbReference type="Proteomes" id="UP000098172">
    <property type="component" value="Genome"/>
</dbReference>
<dbReference type="GO" id="GO:0019029">
    <property type="term" value="C:helical viral capsid"/>
    <property type="evidence" value="ECO:0007669"/>
    <property type="project" value="UniProtKB-UniRule"/>
</dbReference>
<dbReference type="GO" id="GO:0043657">
    <property type="term" value="C:host cell"/>
    <property type="evidence" value="ECO:0007669"/>
    <property type="project" value="GOC"/>
</dbReference>
<dbReference type="GO" id="GO:0042025">
    <property type="term" value="C:host cell nucleus"/>
    <property type="evidence" value="ECO:0007669"/>
    <property type="project" value="UniProtKB-SubCell"/>
</dbReference>
<dbReference type="GO" id="GO:1990904">
    <property type="term" value="C:ribonucleoprotein complex"/>
    <property type="evidence" value="ECO:0007669"/>
    <property type="project" value="UniProtKB-KW"/>
</dbReference>
<dbReference type="GO" id="GO:0019013">
    <property type="term" value="C:viral nucleocapsid"/>
    <property type="evidence" value="ECO:0007669"/>
    <property type="project" value="UniProtKB-UniRule"/>
</dbReference>
<dbReference type="GO" id="GO:0003723">
    <property type="term" value="F:RNA binding"/>
    <property type="evidence" value="ECO:0007669"/>
    <property type="project" value="UniProtKB-UniRule"/>
</dbReference>
<dbReference type="GO" id="GO:0005198">
    <property type="term" value="F:structural molecule activity"/>
    <property type="evidence" value="ECO:0007669"/>
    <property type="project" value="UniProtKB-UniRule"/>
</dbReference>
<dbReference type="GO" id="GO:0046718">
    <property type="term" value="P:symbiont entry into host cell"/>
    <property type="evidence" value="ECO:0007669"/>
    <property type="project" value="UniProtKB-KW"/>
</dbReference>
<dbReference type="GO" id="GO:0075732">
    <property type="term" value="P:viral penetration into host nucleus"/>
    <property type="evidence" value="ECO:0007669"/>
    <property type="project" value="UniProtKB-UniRule"/>
</dbReference>
<dbReference type="HAMAP" id="MF_04070">
    <property type="entry name" value="INFV_NCAP"/>
    <property type="match status" value="1"/>
</dbReference>
<dbReference type="InterPro" id="IPR002141">
    <property type="entry name" value="Flu_NP"/>
</dbReference>
<dbReference type="Pfam" id="PF00506">
    <property type="entry name" value="Flu_NP"/>
    <property type="match status" value="1"/>
</dbReference>
<dbReference type="SUPFAM" id="SSF161003">
    <property type="entry name" value="flu NP-like"/>
    <property type="match status" value="1"/>
</dbReference>
<accession>P06826</accession>
<proteinExistence type="inferred from homology"/>